<feature type="initiator methionine" description="Removed" evidence="2">
    <location>
        <position position="1"/>
    </location>
</feature>
<feature type="chain" id="PRO_0000295858" description="F-actin-capping protein subunit alpha-2">
    <location>
        <begin position="2"/>
        <end position="286"/>
    </location>
</feature>
<feature type="modified residue" description="N-acetylalanine" evidence="2">
    <location>
        <position position="2"/>
    </location>
</feature>
<feature type="modified residue" description="Phosphoserine" evidence="2">
    <location>
        <position position="9"/>
    </location>
</feature>
<dbReference type="EMBL" id="DP000001">
    <property type="protein sequence ID" value="AAY88968.1"/>
    <property type="molecule type" value="Genomic_DNA"/>
</dbReference>
<dbReference type="SMR" id="A4D7Q3"/>
<dbReference type="GO" id="GO:0030863">
    <property type="term" value="C:cortical cytoskeleton"/>
    <property type="evidence" value="ECO:0007669"/>
    <property type="project" value="TreeGrafter"/>
</dbReference>
<dbReference type="GO" id="GO:0008290">
    <property type="term" value="C:F-actin capping protein complex"/>
    <property type="evidence" value="ECO:0007669"/>
    <property type="project" value="InterPro"/>
</dbReference>
<dbReference type="GO" id="GO:0051015">
    <property type="term" value="F:actin filament binding"/>
    <property type="evidence" value="ECO:0007669"/>
    <property type="project" value="TreeGrafter"/>
</dbReference>
<dbReference type="GO" id="GO:0030036">
    <property type="term" value="P:actin cytoskeleton organization"/>
    <property type="evidence" value="ECO:0007669"/>
    <property type="project" value="TreeGrafter"/>
</dbReference>
<dbReference type="GO" id="GO:0051016">
    <property type="term" value="P:barbed-end actin filament capping"/>
    <property type="evidence" value="ECO:0007669"/>
    <property type="project" value="InterPro"/>
</dbReference>
<dbReference type="FunFam" id="3.30.1140.60:FF:000001">
    <property type="entry name" value="F-actin-capping protein subunit alpha"/>
    <property type="match status" value="1"/>
</dbReference>
<dbReference type="FunFam" id="3.90.1150.210:FF:000002">
    <property type="entry name" value="F-actin-capping protein subunit alpha"/>
    <property type="match status" value="1"/>
</dbReference>
<dbReference type="Gene3D" id="3.30.1140.60">
    <property type="entry name" value="F-actin capping protein, alpha subunit"/>
    <property type="match status" value="1"/>
</dbReference>
<dbReference type="Gene3D" id="3.90.1150.210">
    <property type="entry name" value="F-actin capping protein, beta subunit"/>
    <property type="match status" value="1"/>
</dbReference>
<dbReference type="InterPro" id="IPR002189">
    <property type="entry name" value="CapZ_alpha"/>
</dbReference>
<dbReference type="InterPro" id="IPR037282">
    <property type="entry name" value="CapZ_alpha/beta"/>
</dbReference>
<dbReference type="InterPro" id="IPR042276">
    <property type="entry name" value="CapZ_alpha/beta_2"/>
</dbReference>
<dbReference type="InterPro" id="IPR042489">
    <property type="entry name" value="CapZ_alpha_1"/>
</dbReference>
<dbReference type="InterPro" id="IPR017865">
    <property type="entry name" value="F-actin_cap_asu_CS"/>
</dbReference>
<dbReference type="PANTHER" id="PTHR10653">
    <property type="entry name" value="F-ACTIN-CAPPING PROTEIN SUBUNIT ALPHA"/>
    <property type="match status" value="1"/>
</dbReference>
<dbReference type="PANTHER" id="PTHR10653:SF2">
    <property type="entry name" value="F-ACTIN-CAPPING PROTEIN SUBUNIT ALPHA-2"/>
    <property type="match status" value="1"/>
</dbReference>
<dbReference type="Pfam" id="PF01267">
    <property type="entry name" value="F-actin_cap_A"/>
    <property type="match status" value="1"/>
</dbReference>
<dbReference type="PRINTS" id="PR00191">
    <property type="entry name" value="FACTINCAPA"/>
</dbReference>
<dbReference type="SUPFAM" id="SSF90096">
    <property type="entry name" value="Subunits of heterodimeric actin filament capping protein Capz"/>
    <property type="match status" value="1"/>
</dbReference>
<dbReference type="PROSITE" id="PS00748">
    <property type="entry name" value="F_ACTIN_CAPPING_A_1"/>
    <property type="match status" value="1"/>
</dbReference>
<dbReference type="PROSITE" id="PS00749">
    <property type="entry name" value="F_ACTIN_CAPPING_A_2"/>
    <property type="match status" value="1"/>
</dbReference>
<comment type="function">
    <text evidence="1">F-actin-capping proteins bind in a Ca(2+)-independent manner to the fast growing ends of actin filaments (barbed end) thereby blocking the exchange of subunits at these ends. Unlike other capping proteins (such as gelsolin and severin), these proteins do not sever actin filaments (By similarity).</text>
</comment>
<comment type="subunit">
    <text evidence="1 2">Component of the F-actin capping complex, composed of a heterodimer of an alpha and a beta subunit. Component of the WASH complex, composed of F-actin-capping protein subunit alpha (CAPZA1, CAPZA2 or CAPZA3), F-actin-capping protein subunit beta (CAPZB), WASHC1, WASHC2, WASHC3, WASHC4 and WASHC5. Interacts with RCSD1/CAPZIP (By similarity). Directly interacts with CRACD; this interaction decreases binding to actin (By similarity).</text>
</comment>
<comment type="similarity">
    <text evidence="3">Belongs to the F-actin-capping protein alpha subunit family.</text>
</comment>
<sequence>MADLEEQLSDEEKVRIAAKFIIHAPPGEFNEVFNDVRLLLNNDNLLREGAAHAFAQYNLDQFTPVKIEGYEDQVLITEHGDVGNGKFLDPKNRICFKFDHLRKEATDPRPYEAENAIESWRTSVETALRAYVKEHYPNGVCTVYGKKIDGQQTIIACIESHQFQAKNFWNGRWRSEWKFTITPSTTQVVGILKIQVHYYEDGNVQLVSHKDIQDSLTVSNEVQTAKEFIKIVEAAENEYQTAISENYQTMSDTTFKALRRQLPVTRTKIDWNKILSYKIGKEMQNA</sequence>
<protein>
    <recommendedName>
        <fullName>F-actin-capping protein subunit alpha-2</fullName>
    </recommendedName>
    <alternativeName>
        <fullName>CapZ alpha-2</fullName>
    </alternativeName>
</protein>
<gene>
    <name type="primary">CAPZA2</name>
</gene>
<organism>
    <name type="scientific">Artibeus jamaicensis</name>
    <name type="common">Jamaican fruit-eating bat</name>
    <dbReference type="NCBI Taxonomy" id="9417"/>
    <lineage>
        <taxon>Eukaryota</taxon>
        <taxon>Metazoa</taxon>
        <taxon>Chordata</taxon>
        <taxon>Craniata</taxon>
        <taxon>Vertebrata</taxon>
        <taxon>Euteleostomi</taxon>
        <taxon>Mammalia</taxon>
        <taxon>Eutheria</taxon>
        <taxon>Laurasiatheria</taxon>
        <taxon>Chiroptera</taxon>
        <taxon>Yangochiroptera</taxon>
        <taxon>Phyllostomidae</taxon>
        <taxon>Stenodermatinae</taxon>
        <taxon>Artibeus</taxon>
    </lineage>
</organism>
<proteinExistence type="inferred from homology"/>
<evidence type="ECO:0000250" key="1"/>
<evidence type="ECO:0000250" key="2">
    <source>
        <dbReference type="UniProtKB" id="P47755"/>
    </source>
</evidence>
<evidence type="ECO:0000305" key="3"/>
<name>CAZA2_ARTJA</name>
<reference key="1">
    <citation type="submission" date="2005-06" db="EMBL/GenBank/DDBJ databases">
        <title>NISC comparative sequencing initiative.</title>
        <authorList>
            <person name="Antonellis A."/>
            <person name="Ayele K."/>
            <person name="Benjamin B."/>
            <person name="Blakesley R.W."/>
            <person name="Boakye A."/>
            <person name="Bouffard G.G."/>
            <person name="Brinkley C."/>
            <person name="Brooks S."/>
            <person name="Chu G."/>
            <person name="Coleman H."/>
            <person name="Engle J."/>
            <person name="Gestole M."/>
            <person name="Greene A."/>
            <person name="Guan X."/>
            <person name="Gupta J."/>
            <person name="Haghighi P."/>
            <person name="Han J."/>
            <person name="Hansen N."/>
            <person name="Ho S.-L."/>
            <person name="Hu P."/>
            <person name="Hunter G."/>
            <person name="Hurle B."/>
            <person name="Idol J.R."/>
            <person name="Kwong P."/>
            <person name="Laric P."/>
            <person name="Larson S."/>
            <person name="Lee-Lin S.-Q."/>
            <person name="Legaspi R."/>
            <person name="Madden M."/>
            <person name="Maduro Q.L."/>
            <person name="Maduro V.B."/>
            <person name="Margulies E.H."/>
            <person name="Masiello C."/>
            <person name="Maskeri B."/>
            <person name="McDowell J."/>
            <person name="Mojidi H.A."/>
            <person name="Mullikin J.C."/>
            <person name="Oestreicher J.S."/>
            <person name="Park M."/>
            <person name="Portnoy M.E."/>
            <person name="Prasad A."/>
            <person name="Puri O."/>
            <person name="Reddix-Dugue N."/>
            <person name="Schandler K."/>
            <person name="Schueler M.G."/>
            <person name="Sison C."/>
            <person name="Stantripop S."/>
            <person name="Stephen E."/>
            <person name="Taye A."/>
            <person name="Thomas J.W."/>
            <person name="Thomas P.J."/>
            <person name="Tsipouri V."/>
            <person name="Ung L."/>
            <person name="Vogt J.L."/>
            <person name="Wetherby K.D."/>
            <person name="Young A."/>
            <person name="Green E.D."/>
        </authorList>
    </citation>
    <scope>NUCLEOTIDE SEQUENCE [LARGE SCALE GENOMIC DNA]</scope>
</reference>
<keyword id="KW-0007">Acetylation</keyword>
<keyword id="KW-0117">Actin capping</keyword>
<keyword id="KW-0009">Actin-binding</keyword>
<keyword id="KW-0597">Phosphoprotein</keyword>
<accession>A4D7Q3</accession>